<reference key="1">
    <citation type="journal article" date="2005" name="Science">
        <title>The transcriptional landscape of the mammalian genome.</title>
        <authorList>
            <person name="Carninci P."/>
            <person name="Kasukawa T."/>
            <person name="Katayama S."/>
            <person name="Gough J."/>
            <person name="Frith M.C."/>
            <person name="Maeda N."/>
            <person name="Oyama R."/>
            <person name="Ravasi T."/>
            <person name="Lenhard B."/>
            <person name="Wells C."/>
            <person name="Kodzius R."/>
            <person name="Shimokawa K."/>
            <person name="Bajic V.B."/>
            <person name="Brenner S.E."/>
            <person name="Batalov S."/>
            <person name="Forrest A.R."/>
            <person name="Zavolan M."/>
            <person name="Davis M.J."/>
            <person name="Wilming L.G."/>
            <person name="Aidinis V."/>
            <person name="Allen J.E."/>
            <person name="Ambesi-Impiombato A."/>
            <person name="Apweiler R."/>
            <person name="Aturaliya R.N."/>
            <person name="Bailey T.L."/>
            <person name="Bansal M."/>
            <person name="Baxter L."/>
            <person name="Beisel K.W."/>
            <person name="Bersano T."/>
            <person name="Bono H."/>
            <person name="Chalk A.M."/>
            <person name="Chiu K.P."/>
            <person name="Choudhary V."/>
            <person name="Christoffels A."/>
            <person name="Clutterbuck D.R."/>
            <person name="Crowe M.L."/>
            <person name="Dalla E."/>
            <person name="Dalrymple B.P."/>
            <person name="de Bono B."/>
            <person name="Della Gatta G."/>
            <person name="di Bernardo D."/>
            <person name="Down T."/>
            <person name="Engstrom P."/>
            <person name="Fagiolini M."/>
            <person name="Faulkner G."/>
            <person name="Fletcher C.F."/>
            <person name="Fukushima T."/>
            <person name="Furuno M."/>
            <person name="Futaki S."/>
            <person name="Gariboldi M."/>
            <person name="Georgii-Hemming P."/>
            <person name="Gingeras T.R."/>
            <person name="Gojobori T."/>
            <person name="Green R.E."/>
            <person name="Gustincich S."/>
            <person name="Harbers M."/>
            <person name="Hayashi Y."/>
            <person name="Hensch T.K."/>
            <person name="Hirokawa N."/>
            <person name="Hill D."/>
            <person name="Huminiecki L."/>
            <person name="Iacono M."/>
            <person name="Ikeo K."/>
            <person name="Iwama A."/>
            <person name="Ishikawa T."/>
            <person name="Jakt M."/>
            <person name="Kanapin A."/>
            <person name="Katoh M."/>
            <person name="Kawasawa Y."/>
            <person name="Kelso J."/>
            <person name="Kitamura H."/>
            <person name="Kitano H."/>
            <person name="Kollias G."/>
            <person name="Krishnan S.P."/>
            <person name="Kruger A."/>
            <person name="Kummerfeld S.K."/>
            <person name="Kurochkin I.V."/>
            <person name="Lareau L.F."/>
            <person name="Lazarevic D."/>
            <person name="Lipovich L."/>
            <person name="Liu J."/>
            <person name="Liuni S."/>
            <person name="McWilliam S."/>
            <person name="Madan Babu M."/>
            <person name="Madera M."/>
            <person name="Marchionni L."/>
            <person name="Matsuda H."/>
            <person name="Matsuzawa S."/>
            <person name="Miki H."/>
            <person name="Mignone F."/>
            <person name="Miyake S."/>
            <person name="Morris K."/>
            <person name="Mottagui-Tabar S."/>
            <person name="Mulder N."/>
            <person name="Nakano N."/>
            <person name="Nakauchi H."/>
            <person name="Ng P."/>
            <person name="Nilsson R."/>
            <person name="Nishiguchi S."/>
            <person name="Nishikawa S."/>
            <person name="Nori F."/>
            <person name="Ohara O."/>
            <person name="Okazaki Y."/>
            <person name="Orlando V."/>
            <person name="Pang K.C."/>
            <person name="Pavan W.J."/>
            <person name="Pavesi G."/>
            <person name="Pesole G."/>
            <person name="Petrovsky N."/>
            <person name="Piazza S."/>
            <person name="Reed J."/>
            <person name="Reid J.F."/>
            <person name="Ring B.Z."/>
            <person name="Ringwald M."/>
            <person name="Rost B."/>
            <person name="Ruan Y."/>
            <person name="Salzberg S.L."/>
            <person name="Sandelin A."/>
            <person name="Schneider C."/>
            <person name="Schoenbach C."/>
            <person name="Sekiguchi K."/>
            <person name="Semple C.A."/>
            <person name="Seno S."/>
            <person name="Sessa L."/>
            <person name="Sheng Y."/>
            <person name="Shibata Y."/>
            <person name="Shimada H."/>
            <person name="Shimada K."/>
            <person name="Silva D."/>
            <person name="Sinclair B."/>
            <person name="Sperling S."/>
            <person name="Stupka E."/>
            <person name="Sugiura K."/>
            <person name="Sultana R."/>
            <person name="Takenaka Y."/>
            <person name="Taki K."/>
            <person name="Tammoja K."/>
            <person name="Tan S.L."/>
            <person name="Tang S."/>
            <person name="Taylor M.S."/>
            <person name="Tegner J."/>
            <person name="Teichmann S.A."/>
            <person name="Ueda H.R."/>
            <person name="van Nimwegen E."/>
            <person name="Verardo R."/>
            <person name="Wei C.L."/>
            <person name="Yagi K."/>
            <person name="Yamanishi H."/>
            <person name="Zabarovsky E."/>
            <person name="Zhu S."/>
            <person name="Zimmer A."/>
            <person name="Hide W."/>
            <person name="Bult C."/>
            <person name="Grimmond S.M."/>
            <person name="Teasdale R.D."/>
            <person name="Liu E.T."/>
            <person name="Brusic V."/>
            <person name="Quackenbush J."/>
            <person name="Wahlestedt C."/>
            <person name="Mattick J.S."/>
            <person name="Hume D.A."/>
            <person name="Kai C."/>
            <person name="Sasaki D."/>
            <person name="Tomaru Y."/>
            <person name="Fukuda S."/>
            <person name="Kanamori-Katayama M."/>
            <person name="Suzuki M."/>
            <person name="Aoki J."/>
            <person name="Arakawa T."/>
            <person name="Iida J."/>
            <person name="Imamura K."/>
            <person name="Itoh M."/>
            <person name="Kato T."/>
            <person name="Kawaji H."/>
            <person name="Kawagashira N."/>
            <person name="Kawashima T."/>
            <person name="Kojima M."/>
            <person name="Kondo S."/>
            <person name="Konno H."/>
            <person name="Nakano K."/>
            <person name="Ninomiya N."/>
            <person name="Nishio T."/>
            <person name="Okada M."/>
            <person name="Plessy C."/>
            <person name="Shibata K."/>
            <person name="Shiraki T."/>
            <person name="Suzuki S."/>
            <person name="Tagami M."/>
            <person name="Waki K."/>
            <person name="Watahiki A."/>
            <person name="Okamura-Oho Y."/>
            <person name="Suzuki H."/>
            <person name="Kawai J."/>
            <person name="Hayashizaki Y."/>
        </authorList>
    </citation>
    <scope>NUCLEOTIDE SEQUENCE [LARGE SCALE MRNA] (ISOFORMS 3 AND 4)</scope>
    <scope>NUCLEOTIDE SEQUENCE [LARGE SCALE MRNA] OF 1155-1561 (ISOFORM 1)</scope>
    <source>
        <strain>C57BL/6J</strain>
        <tissue>Embryo</tissue>
        <tissue>Kidney</tissue>
        <tissue>Testis</tissue>
    </source>
</reference>
<reference key="2">
    <citation type="journal article" date="2009" name="PLoS Biol.">
        <title>Lineage-specific biology revealed by a finished genome assembly of the mouse.</title>
        <authorList>
            <person name="Church D.M."/>
            <person name="Goodstadt L."/>
            <person name="Hillier L.W."/>
            <person name="Zody M.C."/>
            <person name="Goldstein S."/>
            <person name="She X."/>
            <person name="Bult C.J."/>
            <person name="Agarwala R."/>
            <person name="Cherry J.L."/>
            <person name="DiCuccio M."/>
            <person name="Hlavina W."/>
            <person name="Kapustin Y."/>
            <person name="Meric P."/>
            <person name="Maglott D."/>
            <person name="Birtle Z."/>
            <person name="Marques A.C."/>
            <person name="Graves T."/>
            <person name="Zhou S."/>
            <person name="Teague B."/>
            <person name="Potamousis K."/>
            <person name="Churas C."/>
            <person name="Place M."/>
            <person name="Herschleb J."/>
            <person name="Runnheim R."/>
            <person name="Forrest D."/>
            <person name="Amos-Landgraf J."/>
            <person name="Schwartz D.C."/>
            <person name="Cheng Z."/>
            <person name="Lindblad-Toh K."/>
            <person name="Eichler E.E."/>
            <person name="Ponting C.P."/>
        </authorList>
    </citation>
    <scope>NUCLEOTIDE SEQUENCE [LARGE SCALE GENOMIC DNA]</scope>
    <source>
        <strain>C57BL/6J</strain>
    </source>
</reference>
<reference key="3">
    <citation type="submission" date="1999-12" db="EMBL/GenBank/DDBJ databases">
        <title>Characterization of the mammalian Rad26L gene encoding a putative repair and recombination helicase.</title>
        <authorList>
            <person name="Ramirez M.H."/>
            <person name="Shannon M.E."/>
            <person name="Thelen M.P."/>
        </authorList>
    </citation>
    <scope>NUCLEOTIDE SEQUENCE [MRNA] OF 15-699 (ISOFORM 2)</scope>
</reference>
<reference key="4">
    <citation type="journal article" date="2004" name="Genome Res.">
        <title>The status, quality, and expansion of the NIH full-length cDNA project: the Mammalian Gene Collection (MGC).</title>
        <authorList>
            <consortium name="The MGC Project Team"/>
        </authorList>
    </citation>
    <scope>NUCLEOTIDE SEQUENCE [LARGE SCALE MRNA] OF 280-699 (ISOFORM 3)</scope>
    <scope>NUCLEOTIDE SEQUENCE [LARGE SCALE MRNA] OF 946-1537 (ISOFORM 1)</scope>
    <source>
        <strain>C57BL/6J</strain>
        <tissue>Eye</tissue>
        <tissue>Mammary gland</tissue>
        <tissue>Mammary tumor</tissue>
    </source>
</reference>
<reference key="5">
    <citation type="journal article" date="2010" name="Cell">
        <title>A tissue-specific atlas of mouse protein phosphorylation and expression.</title>
        <authorList>
            <person name="Huttlin E.L."/>
            <person name="Jedrychowski M.P."/>
            <person name="Elias J.E."/>
            <person name="Goswami T."/>
            <person name="Rad R."/>
            <person name="Beausoleil S.A."/>
            <person name="Villen J."/>
            <person name="Haas W."/>
            <person name="Sowa M.E."/>
            <person name="Gygi S.P."/>
        </authorList>
    </citation>
    <scope>PHOSPHORYLATION [LARGE SCALE ANALYSIS] AT SER-968 AND SER-971</scope>
    <scope>IDENTIFICATION BY MASS SPECTROMETRY [LARGE SCALE ANALYSIS]</scope>
    <source>
        <tissue>Testis</tissue>
    </source>
</reference>
<reference key="6">
    <citation type="journal article" date="2020" name="Cell Res.">
        <title>ERCC6L2 promotes DNA orientation-specific recombination in mammalian cells.</title>
        <authorList>
            <person name="Liu X."/>
            <person name="Liu T."/>
            <person name="Shang Y."/>
            <person name="Dai P."/>
            <person name="Zhang W."/>
            <person name="Lee B.J."/>
            <person name="Huang M."/>
            <person name="Yang D."/>
            <person name="Wu Q."/>
            <person name="Liu L.D."/>
            <person name="Zheng X."/>
            <person name="Zhou B.O."/>
            <person name="Dong J."/>
            <person name="Yeap L.S."/>
            <person name="Hu J."/>
            <person name="Xiao T."/>
            <person name="Zha S."/>
            <person name="Casellas R."/>
            <person name="Liu X.S."/>
            <person name="Meng F.L."/>
        </authorList>
    </citation>
    <scope>FUNCTION</scope>
    <scope>INTERACTION WITH CYREN; XRCC6 AND XRCC5</scope>
</reference>
<evidence type="ECO:0000250" key="1">
    <source>
        <dbReference type="UniProtKB" id="Q5T890"/>
    </source>
</evidence>
<evidence type="ECO:0000255" key="2">
    <source>
        <dbReference type="PROSITE-ProRule" id="PRU00541"/>
    </source>
</evidence>
<evidence type="ECO:0000255" key="3">
    <source>
        <dbReference type="PROSITE-ProRule" id="PRU00542"/>
    </source>
</evidence>
<evidence type="ECO:0000256" key="4">
    <source>
        <dbReference type="SAM" id="MobiDB-lite"/>
    </source>
</evidence>
<evidence type="ECO:0000269" key="5">
    <source>
    </source>
</evidence>
<evidence type="ECO:0000303" key="6">
    <source>
    </source>
</evidence>
<evidence type="ECO:0000303" key="7">
    <source>
    </source>
</evidence>
<evidence type="ECO:0000303" key="8">
    <source ref="3"/>
</evidence>
<evidence type="ECO:0000305" key="9"/>
<evidence type="ECO:0000312" key="10">
    <source>
        <dbReference type="MGI" id="MGI:1923501"/>
    </source>
</evidence>
<evidence type="ECO:0007744" key="11">
    <source>
    </source>
</evidence>
<protein>
    <recommendedName>
        <fullName evidence="9">DNA excision repair protein ERCC-6-like 2</fullName>
        <ecNumber>3.6.4.-</ecNumber>
    </recommendedName>
    <alternativeName>
        <fullName>DNA repair and recombination protein RAD26-like</fullName>
    </alternativeName>
</protein>
<keyword id="KW-0025">Alternative splicing</keyword>
<keyword id="KW-0067">ATP-binding</keyword>
<keyword id="KW-0137">Centromere</keyword>
<keyword id="KW-0158">Chromosome</keyword>
<keyword id="KW-0963">Cytoplasm</keyword>
<keyword id="KW-0206">Cytoskeleton</keyword>
<keyword id="KW-0227">DNA damage</keyword>
<keyword id="KW-0234">DNA repair</keyword>
<keyword id="KW-0238">DNA-binding</keyword>
<keyword id="KW-0347">Helicase</keyword>
<keyword id="KW-0378">Hydrolase</keyword>
<keyword id="KW-0496">Mitochondrion</keyword>
<keyword id="KW-0547">Nucleotide-binding</keyword>
<keyword id="KW-0539">Nucleus</keyword>
<keyword id="KW-0597">Phosphoprotein</keyword>
<keyword id="KW-1185">Reference proteome</keyword>
<sequence>MDISAPQSRADSRKDRWCPGERCLAPSLDNKKLCEASIKSITVDGNGKPFAVVLYPDFQEKTIPLQRLQEVKSTKDYSRSLIFDDKDLEKPYFPDRKIPSLASAFQLSEDGDSIPYTINRYLRDYQREGAQFLYRHYIEGRGCILGDDMGLGKTIQVISFLAAVLHKKGTREDIENNMPEFLLKSMKKKPPSTAKKMFLIVAPLSVLYNWKDELDTWGYFRVTVLHGSKKDNELLRLKQRKCEIALTTYETLRLCLEELNSLEWSAIIVDEAHRIKNPKARVTEVMKAVKCKVRIGLTGTVLQNNMKELWCVMDWAVPGLLGSRIHFKKQFSDPVEHGQRHTATKRELATGRKAMHRLAKKMSGWFLRRTKTLIKGQLPKKEDRMVYCSLTDFQKAVYQTVLETEDVALILTSSQPCTCGSGQKRRKCCYKTNSRGDTVRTLCLSYLTVLQKVANHVALLQAASTSKHQETVIKRICDRVFSRFPDFVQKSKDAAFETLSDPKYSGKMKVLQQLLNHFRKQRDKVLLFSFSTKLLDVLQQYCMASGLDYRRLDGSTKSEERLKIVKEFNSSQDVNICLVSTMAGGLGLNFVGANVVILFDPTWNPANDLQAVDRAYRIGQCRDVKVLRLISLGTVEEIMYLRQVYKQQLHCVVVGSENAKRYFEAVQGSKEHRGELFGVHNLFKLRSQGSCLTRDILEREGQVEAGIMTATTWLKGEPSAQELETPRDPDCQEPTDVCELYSDISDEESVGHSLGKTDKHKFSDTSRTPGFPAQLTLLQCGFSKLFEAKYKSDQDGDGNPVPSDGSSDEQPMCLSAEARQAARQKTWDSVCTSEHQKSDNIQTPDEKCVSDKSEKTLEQNVSSESDDETKDHRTAGHHCMGQGDTESEDSDVIFPTQYPTQRIPKNHIRFKLLLGESEDSEAENPVKVNHGDDRQNSGRGNGPVPNLLCLENMTSKSVRKRKGTDDISDESDDIDMFPKSRIRKQRATTSLKFKRKKENKRKLDNSPVTAKEANQVCAADGDRSSQVIEDFSSSDDNLSLSHLSFTKLSHRAETVKDKISLSPKLPGPDKKNNTFISRKPPSFLNEGVISQEQICNSMDKILDGVQEVAYIHSNQNVIGSSRAENHMSRWATRDVFELKQFSQLPANVAVCSSKTYKTQVKANIVSPTEKDQPPSDGGISSPLYVSHPVVQKKKDVYRTNHTTFIIGETPRGIRRKQFEEMASYYKLPVKEFAEQVTRATSEERQKMLRDFYSLQHPEVKEFFVNSASELIKSVHKKEERVRNKSKEKESLLKENPSNDSTLSCYDSTNKMSQVYNRKICEGKSVRSQNHVFHREDTFSSDAEINKSPVSFTEELHSERKDHTPKDTTTVFCPNSNSEALEAELGNSPGRQWDLTGACGSRNRPLFKLRNKRVENPGSENTPEDGLLGDTSILNDLFKSHGEGPTQLPKNVLSGPVAKAKQKPKDFWDILNEQNDDSLSKLTDLAVIETLCTKAPSTSASKRKDELEASLWKANEKFLWKTLSSDVDDESISNTERE</sequence>
<proteinExistence type="evidence at protein level"/>
<feature type="chain" id="PRO_0000326087" description="DNA excision repair protein ERCC-6-like 2">
    <location>
        <begin position="1"/>
        <end position="1537"/>
    </location>
</feature>
<feature type="domain" description="Helicase ATP-binding" evidence="2">
    <location>
        <begin position="134"/>
        <end position="319"/>
    </location>
</feature>
<feature type="domain" description="Helicase C-terminal" evidence="3">
    <location>
        <begin position="510"/>
        <end position="660"/>
    </location>
</feature>
<feature type="region of interest" description="Disordered" evidence="4">
    <location>
        <begin position="715"/>
        <end position="735"/>
    </location>
</feature>
<feature type="region of interest" description="Disordered" evidence="4">
    <location>
        <begin position="749"/>
        <end position="768"/>
    </location>
</feature>
<feature type="region of interest" description="Disordered" evidence="4">
    <location>
        <begin position="791"/>
        <end position="811"/>
    </location>
</feature>
<feature type="region of interest" description="Disordered" evidence="4">
    <location>
        <begin position="833"/>
        <end position="891"/>
    </location>
</feature>
<feature type="region of interest" description="Disordered" evidence="4">
    <location>
        <begin position="918"/>
        <end position="948"/>
    </location>
</feature>
<feature type="region of interest" description="Disordered" evidence="4">
    <location>
        <begin position="1274"/>
        <end position="1306"/>
    </location>
</feature>
<feature type="short sequence motif" description="DEAH box">
    <location>
        <begin position="270"/>
        <end position="273"/>
    </location>
</feature>
<feature type="short sequence motif" description="Atypical PIP-box" evidence="1">
    <location>
        <begin position="772"/>
        <end position="783"/>
    </location>
</feature>
<feature type="compositionally biased region" description="Basic and acidic residues" evidence="4">
    <location>
        <begin position="755"/>
        <end position="764"/>
    </location>
</feature>
<feature type="compositionally biased region" description="Basic and acidic residues" evidence="4">
    <location>
        <begin position="834"/>
        <end position="857"/>
    </location>
</feature>
<feature type="compositionally biased region" description="Basic and acidic residues" evidence="4">
    <location>
        <begin position="1276"/>
        <end position="1292"/>
    </location>
</feature>
<feature type="compositionally biased region" description="Polar residues" evidence="4">
    <location>
        <begin position="1295"/>
        <end position="1306"/>
    </location>
</feature>
<feature type="binding site" evidence="2">
    <location>
        <begin position="147"/>
        <end position="154"/>
    </location>
    <ligand>
        <name>ATP</name>
        <dbReference type="ChEBI" id="CHEBI:30616"/>
    </ligand>
</feature>
<feature type="modified residue" description="Phosphoserine" evidence="11">
    <location>
        <position position="968"/>
    </location>
</feature>
<feature type="modified residue" description="Phosphoserine" evidence="11">
    <location>
        <position position="971"/>
    </location>
</feature>
<feature type="splice variant" id="VSP_054670" description="In isoform 3." evidence="6 7">
    <location>
        <begin position="1"/>
        <end position="116"/>
    </location>
</feature>
<feature type="splice variant" id="VSP_054671" description="In isoform 3." evidence="6 7">
    <original>TINRYLRDYQREGAQFLYRHYIEGRGCILGDDMGLGKTIQ</original>
    <variation>MPGSRPTCRALLAAESGGAAGCLPLARWTSPPRSPAQTPAK</variation>
    <location>
        <begin position="117"/>
        <end position="156"/>
    </location>
</feature>
<feature type="splice variant" id="VSP_054672" description="In isoform 4." evidence="7">
    <original>SLEWSAIIVDEAH</original>
    <variation>RQTFCSSHHEHAS</variation>
    <location>
        <begin position="261"/>
        <end position="273"/>
    </location>
</feature>
<feature type="splice variant" id="VSP_054673" description="In isoform 4." evidence="7">
    <location>
        <begin position="274"/>
        <end position="1537"/>
    </location>
</feature>
<feature type="splice variant" id="VSP_054674" description="In isoform 3." evidence="6 7">
    <location>
        <begin position="583"/>
        <end position="1537"/>
    </location>
</feature>
<feature type="splice variant" id="VSP_054675" description="In isoform 2." evidence="8">
    <original>R</original>
    <variation>V</variation>
    <location>
        <position position="699"/>
    </location>
</feature>
<feature type="splice variant" id="VSP_054676" description="In isoform 2." evidence="8">
    <location>
        <begin position="700"/>
        <end position="1537"/>
    </location>
</feature>
<feature type="sequence conflict" description="In Ref. 1; BAC38652." evidence="9" ref="1">
    <original>C</original>
    <variation>M</variation>
    <location>
        <position position="18"/>
    </location>
</feature>
<feature type="sequence conflict" description="In Ref. 1; BAC28927." evidence="9" ref="1">
    <original>P</original>
    <variation>Q</variation>
    <location>
        <position position="26"/>
    </location>
</feature>
<feature type="sequence conflict" description="In Ref. 3; AAF73858." evidence="9" ref="3">
    <original>K</original>
    <variation>E</variation>
    <location>
        <position position="86"/>
    </location>
</feature>
<feature type="sequence conflict" description="In Ref. 3; AAF73858." evidence="9" ref="3">
    <original>V</original>
    <variation>I</variation>
    <location>
        <position position="301"/>
    </location>
</feature>
<feature type="sequence conflict" description="In Ref. 3; AAF73858 and 4; AAH32964." evidence="9" ref="3 4">
    <original>V</original>
    <variation>I</variation>
    <location>
        <position position="453"/>
    </location>
</feature>
<feature type="sequence conflict" description="In Ref. 1; BAC28927." evidence="9" ref="1">
    <original>T</original>
    <variation>P</variation>
    <location>
        <position position="581"/>
    </location>
</feature>
<feature type="sequence conflict" description="In Ref. 1; BAB24414." evidence="9" ref="1">
    <original>E</original>
    <variation>R</variation>
    <location>
        <position position="1294"/>
    </location>
</feature>
<dbReference type="EC" id="3.6.4.-"/>
<dbReference type="EMBL" id="AK002307">
    <property type="protein sequence ID" value="BAB22002.1"/>
    <property type="molecule type" value="mRNA"/>
</dbReference>
<dbReference type="EMBL" id="AK006112">
    <property type="protein sequence ID" value="BAB24414.1"/>
    <property type="status" value="ALT_SEQ"/>
    <property type="molecule type" value="mRNA"/>
</dbReference>
<dbReference type="EMBL" id="AK035054">
    <property type="protein sequence ID" value="BAC28927.1"/>
    <property type="molecule type" value="mRNA"/>
</dbReference>
<dbReference type="EMBL" id="AK082850">
    <property type="protein sequence ID" value="BAC38652.1"/>
    <property type="molecule type" value="mRNA"/>
</dbReference>
<dbReference type="EMBL" id="AC154248">
    <property type="status" value="NOT_ANNOTATED_CDS"/>
    <property type="molecule type" value="Genomic_DNA"/>
</dbReference>
<dbReference type="EMBL" id="AF217319">
    <property type="protein sequence ID" value="AAF73858.1"/>
    <property type="molecule type" value="mRNA"/>
</dbReference>
<dbReference type="EMBL" id="BC026917">
    <property type="protein sequence ID" value="AAH26917.1"/>
    <property type="status" value="ALT_INIT"/>
    <property type="molecule type" value="mRNA"/>
</dbReference>
<dbReference type="EMBL" id="BC032964">
    <property type="protein sequence ID" value="AAH32964.1"/>
    <property type="status" value="ALT_FRAME"/>
    <property type="molecule type" value="mRNA"/>
</dbReference>
<dbReference type="EMBL" id="BC075679">
    <property type="protein sequence ID" value="AAH75679.1"/>
    <property type="status" value="ALT_INIT"/>
    <property type="molecule type" value="mRNA"/>
</dbReference>
<dbReference type="CCDS" id="CCDS26593.2">
    <molecule id="Q9JIM3-1"/>
</dbReference>
<dbReference type="CCDS" id="CCDS36701.1">
    <molecule id="Q9JIM3-2"/>
</dbReference>
<dbReference type="RefSeq" id="NP_001013626.2">
    <molecule id="Q9JIM3-1"/>
    <property type="nucleotide sequence ID" value="NM_001013608.4"/>
</dbReference>
<dbReference type="RefSeq" id="NP_001348053.1">
    <molecule id="Q9JIM3-3"/>
    <property type="nucleotide sequence ID" value="NM_001361124.2"/>
</dbReference>
<dbReference type="RefSeq" id="NP_075996.2">
    <molecule id="Q9JIM3-2"/>
    <property type="nucleotide sequence ID" value="NM_023507.3"/>
</dbReference>
<dbReference type="SMR" id="Q9JIM3"/>
<dbReference type="FunCoup" id="Q9JIM3">
    <property type="interactions" value="3575"/>
</dbReference>
<dbReference type="STRING" id="10090.ENSMUSP00000069488"/>
<dbReference type="iPTMnet" id="Q9JIM3"/>
<dbReference type="PhosphoSitePlus" id="Q9JIM3"/>
<dbReference type="jPOST" id="Q9JIM3"/>
<dbReference type="PaxDb" id="10090-ENSMUSP00000093392"/>
<dbReference type="ProteomicsDB" id="275640">
    <molecule id="Q9JIM3-1"/>
</dbReference>
<dbReference type="ProteomicsDB" id="275641">
    <molecule id="Q9JIM3-2"/>
</dbReference>
<dbReference type="ProteomicsDB" id="275642">
    <molecule id="Q9JIM3-3"/>
</dbReference>
<dbReference type="DNASU" id="76251"/>
<dbReference type="Ensembl" id="ENSMUST00000067821.13">
    <molecule id="Q9JIM3-2"/>
    <property type="protein sequence ID" value="ENSMUSP00000069488.6"/>
    <property type="gene ID" value="ENSMUSG00000021470.20"/>
</dbReference>
<dbReference type="Ensembl" id="ENSMUST00000144763.2">
    <molecule id="Q9JIM3-4"/>
    <property type="protein sequence ID" value="ENSMUSP00000152142.2"/>
    <property type="gene ID" value="ENSMUSG00000021470.20"/>
</dbReference>
<dbReference type="Ensembl" id="ENSMUST00000238465.2">
    <molecule id="Q9JIM3-1"/>
    <property type="protein sequence ID" value="ENSMUSP00000158755.2"/>
    <property type="gene ID" value="ENSMUSG00000021470.20"/>
</dbReference>
<dbReference type="GeneID" id="76251"/>
<dbReference type="KEGG" id="mmu:76251"/>
<dbReference type="UCSC" id="uc007qyb.2">
    <molecule id="Q9JIM3-3"/>
    <property type="organism name" value="mouse"/>
</dbReference>
<dbReference type="UCSC" id="uc007qyc.2">
    <molecule id="Q9JIM3-2"/>
    <property type="organism name" value="mouse"/>
</dbReference>
<dbReference type="UCSC" id="uc007qye.2">
    <molecule id="Q9JIM3-1"/>
    <property type="organism name" value="mouse"/>
</dbReference>
<dbReference type="AGR" id="MGI:1923501"/>
<dbReference type="CTD" id="375748"/>
<dbReference type="MGI" id="MGI:1923501">
    <property type="gene designation" value="Ercc6l2"/>
</dbReference>
<dbReference type="VEuPathDB" id="HostDB:ENSMUSG00000021470"/>
<dbReference type="eggNOG" id="KOG0387">
    <property type="taxonomic scope" value="Eukaryota"/>
</dbReference>
<dbReference type="GeneTree" id="ENSGT00940000161328"/>
<dbReference type="HOGENOM" id="CLU_585201_0_0_1"/>
<dbReference type="InParanoid" id="Q9JIM3"/>
<dbReference type="OMA" id="DGVIWPY"/>
<dbReference type="OrthoDB" id="448448at2759"/>
<dbReference type="BioGRID-ORCS" id="76251">
    <property type="hits" value="8 hits in 109 CRISPR screens"/>
</dbReference>
<dbReference type="ChiTaRS" id="Ercc6l2">
    <property type="organism name" value="mouse"/>
</dbReference>
<dbReference type="PRO" id="PR:Q9JIM3"/>
<dbReference type="Proteomes" id="UP000000589">
    <property type="component" value="Chromosome 13"/>
</dbReference>
<dbReference type="RNAct" id="Q9JIM3">
    <property type="molecule type" value="protein"/>
</dbReference>
<dbReference type="Bgee" id="ENSMUSG00000021470">
    <property type="expression patterns" value="Expressed in metanephric cortical collecting duct and 246 other cell types or tissues"/>
</dbReference>
<dbReference type="ExpressionAtlas" id="Q9JIM3">
    <property type="expression patterns" value="baseline and differential"/>
</dbReference>
<dbReference type="GO" id="GO:0005813">
    <property type="term" value="C:centrosome"/>
    <property type="evidence" value="ECO:0007669"/>
    <property type="project" value="UniProtKB-SubCell"/>
</dbReference>
<dbReference type="GO" id="GO:0000775">
    <property type="term" value="C:chromosome, centromeric region"/>
    <property type="evidence" value="ECO:0000250"/>
    <property type="project" value="UniProtKB"/>
</dbReference>
<dbReference type="GO" id="GO:0005739">
    <property type="term" value="C:mitochondrion"/>
    <property type="evidence" value="ECO:0007669"/>
    <property type="project" value="UniProtKB-SubCell"/>
</dbReference>
<dbReference type="GO" id="GO:0005634">
    <property type="term" value="C:nucleus"/>
    <property type="evidence" value="ECO:0007669"/>
    <property type="project" value="UniProtKB-SubCell"/>
</dbReference>
<dbReference type="GO" id="GO:0005524">
    <property type="term" value="F:ATP binding"/>
    <property type="evidence" value="ECO:0007669"/>
    <property type="project" value="UniProtKB-KW"/>
</dbReference>
<dbReference type="GO" id="GO:0003677">
    <property type="term" value="F:DNA binding"/>
    <property type="evidence" value="ECO:0007669"/>
    <property type="project" value="UniProtKB-KW"/>
</dbReference>
<dbReference type="GO" id="GO:0004386">
    <property type="term" value="F:helicase activity"/>
    <property type="evidence" value="ECO:0007669"/>
    <property type="project" value="UniProtKB-KW"/>
</dbReference>
<dbReference type="GO" id="GO:0016787">
    <property type="term" value="F:hydrolase activity"/>
    <property type="evidence" value="ECO:0007669"/>
    <property type="project" value="UniProtKB-KW"/>
</dbReference>
<dbReference type="GO" id="GO:0006974">
    <property type="term" value="P:DNA damage response"/>
    <property type="evidence" value="ECO:0000250"/>
    <property type="project" value="UniProtKB"/>
</dbReference>
<dbReference type="GO" id="GO:0097680">
    <property type="term" value="P:double-strand break repair via classical nonhomologous end joining"/>
    <property type="evidence" value="ECO:0000314"/>
    <property type="project" value="UniProtKB"/>
</dbReference>
<dbReference type="CDD" id="cd18005">
    <property type="entry name" value="DEXHc_ERCC6L2"/>
    <property type="match status" value="1"/>
</dbReference>
<dbReference type="CDD" id="cd18793">
    <property type="entry name" value="SF2_C_SNF"/>
    <property type="match status" value="1"/>
</dbReference>
<dbReference type="FunFam" id="3.40.50.10810:FF:000019">
    <property type="entry name" value="DNA excision repair protein ERCC-6-like 2 isoform X1"/>
    <property type="match status" value="1"/>
</dbReference>
<dbReference type="FunFam" id="3.40.50.300:FF:000821">
    <property type="entry name" value="DNA excision repair protein ERCC-6-like 2 isoform X1"/>
    <property type="match status" value="1"/>
</dbReference>
<dbReference type="Gene3D" id="3.40.50.300">
    <property type="entry name" value="P-loop containing nucleotide triphosphate hydrolases"/>
    <property type="match status" value="1"/>
</dbReference>
<dbReference type="Gene3D" id="3.40.50.10810">
    <property type="entry name" value="Tandem AAA-ATPase domain"/>
    <property type="match status" value="1"/>
</dbReference>
<dbReference type="InterPro" id="IPR002464">
    <property type="entry name" value="DNA/RNA_helicase_DEAH_CS"/>
</dbReference>
<dbReference type="InterPro" id="IPR014001">
    <property type="entry name" value="Helicase_ATP-bd"/>
</dbReference>
<dbReference type="InterPro" id="IPR001650">
    <property type="entry name" value="Helicase_C-like"/>
</dbReference>
<dbReference type="InterPro" id="IPR029256">
    <property type="entry name" value="Heliccase-ass-bd"/>
</dbReference>
<dbReference type="InterPro" id="IPR027417">
    <property type="entry name" value="P-loop_NTPase"/>
</dbReference>
<dbReference type="InterPro" id="IPR038718">
    <property type="entry name" value="SNF2-like_sf"/>
</dbReference>
<dbReference type="InterPro" id="IPR049730">
    <property type="entry name" value="SNF2/RAD54-like_C"/>
</dbReference>
<dbReference type="InterPro" id="IPR000330">
    <property type="entry name" value="SNF2_N"/>
</dbReference>
<dbReference type="InterPro" id="IPR050496">
    <property type="entry name" value="SNF2_RAD54_helicase_repair"/>
</dbReference>
<dbReference type="PANTHER" id="PTHR45629:SF7">
    <property type="entry name" value="DNA EXCISION REPAIR PROTEIN ERCC-6-RELATED"/>
    <property type="match status" value="1"/>
</dbReference>
<dbReference type="PANTHER" id="PTHR45629">
    <property type="entry name" value="SNF2/RAD54 FAMILY MEMBER"/>
    <property type="match status" value="1"/>
</dbReference>
<dbReference type="Pfam" id="PF00271">
    <property type="entry name" value="Helicase_C"/>
    <property type="match status" value="1"/>
</dbReference>
<dbReference type="Pfam" id="PF00176">
    <property type="entry name" value="SNF2-rel_dom"/>
    <property type="match status" value="1"/>
</dbReference>
<dbReference type="Pfam" id="PF14773">
    <property type="entry name" value="VIGSSK"/>
    <property type="match status" value="1"/>
</dbReference>
<dbReference type="SMART" id="SM00487">
    <property type="entry name" value="DEXDc"/>
    <property type="match status" value="1"/>
</dbReference>
<dbReference type="SMART" id="SM00490">
    <property type="entry name" value="HELICc"/>
    <property type="match status" value="1"/>
</dbReference>
<dbReference type="SUPFAM" id="SSF52540">
    <property type="entry name" value="P-loop containing nucleoside triphosphate hydrolases"/>
    <property type="match status" value="2"/>
</dbReference>
<dbReference type="PROSITE" id="PS00690">
    <property type="entry name" value="DEAH_ATP_HELICASE"/>
    <property type="match status" value="1"/>
</dbReference>
<dbReference type="PROSITE" id="PS51192">
    <property type="entry name" value="HELICASE_ATP_BIND_1"/>
    <property type="match status" value="1"/>
</dbReference>
<dbReference type="PROSITE" id="PS51194">
    <property type="entry name" value="HELICASE_CTER"/>
    <property type="match status" value="1"/>
</dbReference>
<gene>
    <name evidence="10" type="primary">Ercc6l2</name>
    <name type="synonym">Rad26l</name>
</gene>
<comment type="function">
    <text evidence="1 5">Promotes double-strand break (DSB) end-joining and facilitates programmed recombination by controlling how DNA ends are joined in a spatially oriented manner during repair (PubMed:32355287). Also plays a role in DNA repair by restricting DNA end resection in double strand break (DSB) repair. Facilitates replication of complex DNA regions and regulates the maintenance of chromatin structure (By similarity).</text>
</comment>
<comment type="subunit">
    <text evidence="1 5">Interacts with NEK6. Interacts (via an atypical PIP-box) with PCNA; this interaction facilitates cenrtomeric localization of ERCC6L2 (By similarity). Interacts with CYREN; this interaction is DNA independent (PubMed:32355287). Interacts with XRCC6 and XRCC5 (PubMed:32355287).</text>
</comment>
<comment type="subcellular location">
    <subcellularLocation>
        <location evidence="1">Nucleus</location>
    </subcellularLocation>
    <subcellularLocation>
        <location evidence="1">Cytoplasm</location>
        <location evidence="1">Cytoskeleton</location>
        <location evidence="1">Microtubule organizing center</location>
        <location evidence="1">Centrosome</location>
    </subcellularLocation>
    <subcellularLocation>
        <location evidence="1">Mitochondrion</location>
    </subcellularLocation>
    <subcellularLocation>
        <location evidence="1">Chromosome</location>
        <location evidence="1">Centromere</location>
    </subcellularLocation>
    <text evidence="1">Colocalizes with NEK6 in the centrosome. In response to DNA damage, translocates from the cytosol to mitochondria and nucleus in a reactive oxygen species (ROS)-dependent manner. Centromeric localization is facilitated by its interaction with PCNA.</text>
</comment>
<comment type="alternative products">
    <event type="alternative splicing"/>
    <isoform>
        <id>Q9JIM3-1</id>
        <name>1</name>
        <sequence type="displayed"/>
    </isoform>
    <isoform>
        <id>Q9JIM3-2</id>
        <name>2</name>
        <sequence type="described" ref="VSP_054675 VSP_054676"/>
    </isoform>
    <isoform>
        <id>Q9JIM3-3</id>
        <name>3</name>
        <sequence type="described" ref="VSP_054670 VSP_054671 VSP_054674"/>
    </isoform>
    <isoform>
        <id>Q9JIM3-4</id>
        <name>4</name>
        <sequence type="described" ref="VSP_054672 VSP_054673"/>
    </isoform>
</comment>
<comment type="domain">
    <text evidence="1">The atypical PIP-box motif mediates interaction with PCNA.</text>
</comment>
<comment type="domain">
    <text evidence="1">The helicase C-terminal domaine drives nuclear localization and recruitment to damaged sites.</text>
</comment>
<comment type="PTM">
    <text evidence="1">Phosphorylated by NEK6.</text>
</comment>
<comment type="similarity">
    <text evidence="9">Belongs to the SNF2/RAD54 helicase family.</text>
</comment>
<comment type="sequence caution" evidence="9">
    <conflict type="erroneous initiation">
        <sequence resource="EMBL-CDS" id="AAH26917"/>
    </conflict>
    <text>Truncated N-terminus.</text>
</comment>
<comment type="sequence caution" evidence="9">
    <conflict type="frameshift">
        <sequence resource="EMBL-CDS" id="AAH32964"/>
    </conflict>
</comment>
<comment type="sequence caution" evidence="9">
    <conflict type="erroneous initiation">
        <sequence resource="EMBL-CDS" id="AAH75679"/>
    </conflict>
    <text>Truncated N-terminus.</text>
</comment>
<comment type="sequence caution" evidence="9">
    <conflict type="miscellaneous discrepancy">
        <sequence resource="EMBL-CDS" id="BAB24414"/>
    </conflict>
    <text>The first 10 codons may be found on an alternative exon not observed on any other cDNA/EST.</text>
</comment>
<organism>
    <name type="scientific">Mus musculus</name>
    <name type="common">Mouse</name>
    <dbReference type="NCBI Taxonomy" id="10090"/>
    <lineage>
        <taxon>Eukaryota</taxon>
        <taxon>Metazoa</taxon>
        <taxon>Chordata</taxon>
        <taxon>Craniata</taxon>
        <taxon>Vertebrata</taxon>
        <taxon>Euteleostomi</taxon>
        <taxon>Mammalia</taxon>
        <taxon>Eutheria</taxon>
        <taxon>Euarchontoglires</taxon>
        <taxon>Glires</taxon>
        <taxon>Rodentia</taxon>
        <taxon>Myomorpha</taxon>
        <taxon>Muroidea</taxon>
        <taxon>Muridae</taxon>
        <taxon>Murinae</taxon>
        <taxon>Mus</taxon>
        <taxon>Mus</taxon>
    </lineage>
</organism>
<name>ER6L2_MOUSE</name>
<accession>Q9JIM3</accession>
<accession>E9Q4J6</accession>
<accession>Q6DI94</accession>
<accession>Q8BIV4</accession>
<accession>Q8BM40</accession>
<accession>Q8K267</accession>
<accession>Q8R2Z6</accession>
<accession>Q9DA70</accession>
<accession>Q9DD01</accession>